<gene>
    <name type="primary">Csf3r</name>
    <name type="synonym">Csfgr</name>
</gene>
<organism>
    <name type="scientific">Mus musculus</name>
    <name type="common">Mouse</name>
    <dbReference type="NCBI Taxonomy" id="10090"/>
    <lineage>
        <taxon>Eukaryota</taxon>
        <taxon>Metazoa</taxon>
        <taxon>Chordata</taxon>
        <taxon>Craniata</taxon>
        <taxon>Vertebrata</taxon>
        <taxon>Euteleostomi</taxon>
        <taxon>Mammalia</taxon>
        <taxon>Eutheria</taxon>
        <taxon>Euarchontoglires</taxon>
        <taxon>Glires</taxon>
        <taxon>Rodentia</taxon>
        <taxon>Myomorpha</taxon>
        <taxon>Muroidea</taxon>
        <taxon>Muridae</taxon>
        <taxon>Murinae</taxon>
        <taxon>Mus</taxon>
        <taxon>Mus</taxon>
    </lineage>
</organism>
<evidence type="ECO:0000250" key="1"/>
<evidence type="ECO:0000250" key="2">
    <source>
        <dbReference type="UniProtKB" id="Q99062"/>
    </source>
</evidence>
<evidence type="ECO:0000255" key="3"/>
<evidence type="ECO:0000255" key="4">
    <source>
        <dbReference type="PROSITE-ProRule" id="PRU00316"/>
    </source>
</evidence>
<evidence type="ECO:0000269" key="5">
    <source>
    </source>
</evidence>
<evidence type="ECO:0000269" key="6">
    <source>
    </source>
</evidence>
<evidence type="ECO:0000305" key="7"/>
<evidence type="ECO:0007829" key="8">
    <source>
        <dbReference type="PDB" id="1CD9"/>
    </source>
</evidence>
<evidence type="ECO:0007829" key="9">
    <source>
        <dbReference type="PDB" id="1CTO"/>
    </source>
</evidence>
<evidence type="ECO:0007829" key="10">
    <source>
        <dbReference type="PDB" id="1GCF"/>
    </source>
</evidence>
<sequence>MVGLGACTLTGVTLIFLLLPRSLESCGHIEISPPVVRLGDPVLASCTISPNCSKLDQQAKILWRLQDEPIQPGDRQHHLPDGTQESLITLPHLNYTQAFLFCLVPWEDSVQLLDQAELHAGYPPASPSNLSCLMHLTTNSLVCQWEPGPETHLPTSFILKSFRSRADCQYQGDTIPDCVAKKRQNNCSIPRKNLLLYQYMAIWVQAENMLGSSESPKLCLDPMDVVKLEPPMLQALDIGPDVVSHQPGCLWLSWKPWKPSEYMEQECELRYQPQLKGANWTLVFHLPSSKDQFELCGLHQAPVYTLQMRCIRSSLPGFWSPWSPGLQLRPTMKAPTIRLDTWCQKKQLDPGTVSVQLFWKPTPLQEDSGQIQGYLLSWSSPDHQGQDIHLCNTTQLSCIFLLPSEAQNVTLVAYNKAGTSSPTTVVFLENEGPAVTGLHAMAQDLNTIWVDWEAPSLLPQGYLIEWEMSSPSYNNSYKSWMIEPNGNITGILLKDNINPFQLYRITVAPLYPGIVGPPVNVYTFAGERAPPHAPALHLKHVGTTWAQLEWVPEAPRLGMIPLTHYTIFWADAGDHSFSVTLNISLHDFVLKHLEPASLYHVYLMATSRAGSTNSTGLTLRTLDPSDLNIFLGILCLVLLSTTCVVTWLCCKRRGKTSFWSDVPDPAHSSLSSWLPTIMTEETFQLPSFWDSSVPSITKITELEEDKKPTHWDSESSGNGSLPALVQAYVLQGDPREISNQSQPPSRTGDQVLYGQVLESPTSPGVMQYIRSDSTQPLLGGPTPSPKSYENIWFHSRPQETFVPQPPNQEDDCVFGPPFDFPLFQGLQVHGVEEQGGF</sequence>
<proteinExistence type="evidence at protein level"/>
<keyword id="KW-0002">3D-structure</keyword>
<keyword id="KW-0130">Cell adhesion</keyword>
<keyword id="KW-1015">Disulfide bond</keyword>
<keyword id="KW-0325">Glycoprotein</keyword>
<keyword id="KW-0393">Immunoglobulin domain</keyword>
<keyword id="KW-0472">Membrane</keyword>
<keyword id="KW-0675">Receptor</keyword>
<keyword id="KW-1185">Reference proteome</keyword>
<keyword id="KW-0677">Repeat</keyword>
<keyword id="KW-0732">Signal</keyword>
<keyword id="KW-0812">Transmembrane</keyword>
<keyword id="KW-1133">Transmembrane helix</keyword>
<comment type="function">
    <text>Receptor for granulocyte colony-stimulating factor (CSF3). In addition it may function in some adhesion or recognition events at the cell surface.</text>
</comment>
<comment type="subunit">
    <text evidence="5 6">Homodimer. The dimeric receptor binds two CSF3 molecules. Interacts with CEACAM1; down-regulates the CSF3R-STAT3 pathway through recruitment of PTPN6 that dephosphorylates CSF3R (PubMed:21029969).</text>
</comment>
<comment type="subcellular location">
    <subcellularLocation>
        <location>Membrane</location>
        <topology>Single-pass type I membrane protein</topology>
    </subcellularLocation>
</comment>
<comment type="tissue specificity">
    <text>Found in bone marrow.</text>
</comment>
<comment type="domain">
    <text>The WSXWS motif appears to be necessary for proper protein folding and thereby efficient intracellular transport and cell-surface receptor binding.</text>
</comment>
<comment type="domain">
    <text>The box 1 motif is required for JAK interaction and/or activation.</text>
</comment>
<comment type="PTM">
    <text evidence="2">N-glycosylated.</text>
</comment>
<comment type="similarity">
    <text evidence="7">Belongs to the type I cytokine receptor family. Type 2 subfamily.</text>
</comment>
<dbReference type="EMBL" id="M58288">
    <property type="protein sequence ID" value="AAA37673.1"/>
    <property type="molecule type" value="mRNA"/>
</dbReference>
<dbReference type="EMBL" id="AL627101">
    <property type="status" value="NOT_ANNOTATED_CDS"/>
    <property type="molecule type" value="Genomic_DNA"/>
</dbReference>
<dbReference type="CCDS" id="CCDS18640.1"/>
<dbReference type="PIR" id="A34898">
    <property type="entry name" value="A34898"/>
</dbReference>
<dbReference type="RefSeq" id="NP_001407820.1">
    <property type="nucleotide sequence ID" value="NM_001420891.1"/>
</dbReference>
<dbReference type="RefSeq" id="NP_001407821.1">
    <property type="nucleotide sequence ID" value="NM_001420892.1"/>
</dbReference>
<dbReference type="RefSeq" id="NP_001407822.1">
    <property type="nucleotide sequence ID" value="NM_001420893.1"/>
</dbReference>
<dbReference type="RefSeq" id="NP_001407823.1">
    <property type="nucleotide sequence ID" value="NM_001420894.1"/>
</dbReference>
<dbReference type="RefSeq" id="NP_001407824.1">
    <property type="nucleotide sequence ID" value="NM_001420895.1"/>
</dbReference>
<dbReference type="RefSeq" id="NP_031808.2">
    <property type="nucleotide sequence ID" value="NM_007782.4"/>
</dbReference>
<dbReference type="RefSeq" id="XP_006502771.1">
    <property type="nucleotide sequence ID" value="XM_006502708.3"/>
</dbReference>
<dbReference type="RefSeq" id="XP_006502772.1">
    <property type="nucleotide sequence ID" value="XM_006502709.3"/>
</dbReference>
<dbReference type="RefSeq" id="XP_006502773.1">
    <property type="nucleotide sequence ID" value="XM_006502710.5"/>
</dbReference>
<dbReference type="RefSeq" id="XP_006502774.1">
    <property type="nucleotide sequence ID" value="XM_006502711.5"/>
</dbReference>
<dbReference type="RefSeq" id="XP_006502775.1">
    <property type="nucleotide sequence ID" value="XM_006502712.3"/>
</dbReference>
<dbReference type="RefSeq" id="XP_006502776.1">
    <property type="nucleotide sequence ID" value="XM_006502713.2"/>
</dbReference>
<dbReference type="RefSeq" id="XP_006502777.1">
    <property type="nucleotide sequence ID" value="XM_006502714.2"/>
</dbReference>
<dbReference type="RefSeq" id="XP_011238723.1">
    <property type="nucleotide sequence ID" value="XM_011240421.2"/>
</dbReference>
<dbReference type="RefSeq" id="XP_011238724.1">
    <property type="nucleotide sequence ID" value="XM_011240422.2"/>
</dbReference>
<dbReference type="RefSeq" id="XP_017175433.1">
    <property type="nucleotide sequence ID" value="XM_017319944.1"/>
</dbReference>
<dbReference type="PDB" id="1CD9">
    <property type="method" value="X-ray"/>
    <property type="resolution" value="2.80 A"/>
    <property type="chains" value="B/D=120-334"/>
</dbReference>
<dbReference type="PDB" id="1CTO">
    <property type="method" value="NMR"/>
    <property type="chains" value="A=228-333"/>
</dbReference>
<dbReference type="PDB" id="1GCF">
    <property type="method" value="NMR"/>
    <property type="chains" value="A=228-333"/>
</dbReference>
<dbReference type="PDB" id="1PGR">
    <property type="method" value="X-ray"/>
    <property type="resolution" value="3.50 A"/>
    <property type="chains" value="B/D/F/H=120-334"/>
</dbReference>
<dbReference type="PDBsum" id="1CD9"/>
<dbReference type="PDBsum" id="1CTO"/>
<dbReference type="PDBsum" id="1GCF"/>
<dbReference type="PDBsum" id="1PGR"/>
<dbReference type="SMR" id="P40223"/>
<dbReference type="BioGRID" id="198935">
    <property type="interactions" value="3"/>
</dbReference>
<dbReference type="CORUM" id="P40223"/>
<dbReference type="DIP" id="DIP-61167N"/>
<dbReference type="ELM" id="P40223"/>
<dbReference type="FunCoup" id="P40223">
    <property type="interactions" value="751"/>
</dbReference>
<dbReference type="IntAct" id="P40223">
    <property type="interactions" value="1"/>
</dbReference>
<dbReference type="STRING" id="10090.ENSMUSP00000101768"/>
<dbReference type="GlyCosmos" id="P40223">
    <property type="glycosylation" value="11 sites, No reported glycans"/>
</dbReference>
<dbReference type="GlyGen" id="P40223">
    <property type="glycosylation" value="12 sites"/>
</dbReference>
<dbReference type="iPTMnet" id="P40223"/>
<dbReference type="PhosphoSitePlus" id="P40223"/>
<dbReference type="PaxDb" id="10090-ENSMUSP00000101768"/>
<dbReference type="ProteomicsDB" id="277903"/>
<dbReference type="Antibodypedia" id="4479">
    <property type="antibodies" value="672 antibodies from 41 providers"/>
</dbReference>
<dbReference type="DNASU" id="12986"/>
<dbReference type="Ensembl" id="ENSMUST00000030673.7">
    <property type="protein sequence ID" value="ENSMUSP00000030673.7"/>
    <property type="gene ID" value="ENSMUSG00000028859.15"/>
</dbReference>
<dbReference type="Ensembl" id="ENSMUST00000106162.8">
    <property type="protein sequence ID" value="ENSMUSP00000101768.2"/>
    <property type="gene ID" value="ENSMUSG00000028859.15"/>
</dbReference>
<dbReference type="GeneID" id="12986"/>
<dbReference type="KEGG" id="mmu:12986"/>
<dbReference type="UCSC" id="uc008usd.3">
    <property type="organism name" value="mouse"/>
</dbReference>
<dbReference type="AGR" id="MGI:1339755"/>
<dbReference type="CTD" id="1441"/>
<dbReference type="MGI" id="MGI:1339755">
    <property type="gene designation" value="Csf3r"/>
</dbReference>
<dbReference type="VEuPathDB" id="HostDB:ENSMUSG00000028859"/>
<dbReference type="eggNOG" id="ENOG502QT3H">
    <property type="taxonomic scope" value="Eukaryota"/>
</dbReference>
<dbReference type="GeneTree" id="ENSGT00940000158915"/>
<dbReference type="HOGENOM" id="CLU_017990_0_0_1"/>
<dbReference type="InParanoid" id="P40223"/>
<dbReference type="OMA" id="SYCSIPR"/>
<dbReference type="OrthoDB" id="9887129at2759"/>
<dbReference type="PhylomeDB" id="P40223"/>
<dbReference type="TreeFam" id="TF338122"/>
<dbReference type="BioGRID-ORCS" id="12986">
    <property type="hits" value="1 hit in 77 CRISPR screens"/>
</dbReference>
<dbReference type="EvolutionaryTrace" id="P40223"/>
<dbReference type="PRO" id="PR:P40223"/>
<dbReference type="Proteomes" id="UP000000589">
    <property type="component" value="Chromosome 4"/>
</dbReference>
<dbReference type="RNAct" id="P40223">
    <property type="molecule type" value="protein"/>
</dbReference>
<dbReference type="Bgee" id="ENSMUSG00000028859">
    <property type="expression patterns" value="Expressed in granulocyte and 70 other cell types or tissues"/>
</dbReference>
<dbReference type="GO" id="GO:0030666">
    <property type="term" value="C:endocytic vesicle membrane"/>
    <property type="evidence" value="ECO:0000304"/>
    <property type="project" value="Reactome"/>
</dbReference>
<dbReference type="GO" id="GO:0005886">
    <property type="term" value="C:plasma membrane"/>
    <property type="evidence" value="ECO:0000304"/>
    <property type="project" value="Reactome"/>
</dbReference>
<dbReference type="GO" id="GO:0004896">
    <property type="term" value="F:cytokine receptor activity"/>
    <property type="evidence" value="ECO:0007669"/>
    <property type="project" value="InterPro"/>
</dbReference>
<dbReference type="GO" id="GO:0051916">
    <property type="term" value="F:granulocyte colony-stimulating factor binding"/>
    <property type="evidence" value="ECO:0000353"/>
    <property type="project" value="MGI"/>
</dbReference>
<dbReference type="GO" id="GO:0097186">
    <property type="term" value="P:amelogenesis"/>
    <property type="evidence" value="ECO:0007669"/>
    <property type="project" value="Ensembl"/>
</dbReference>
<dbReference type="GO" id="GO:0007155">
    <property type="term" value="P:cell adhesion"/>
    <property type="evidence" value="ECO:0007669"/>
    <property type="project" value="UniProtKB-KW"/>
</dbReference>
<dbReference type="GO" id="GO:0030593">
    <property type="term" value="P:neutrophil chemotaxis"/>
    <property type="evidence" value="ECO:0000315"/>
    <property type="project" value="MGI"/>
</dbReference>
<dbReference type="GO" id="GO:0045637">
    <property type="term" value="P:regulation of myeloid cell differentiation"/>
    <property type="evidence" value="ECO:0000316"/>
    <property type="project" value="MGI"/>
</dbReference>
<dbReference type="CDD" id="cd00063">
    <property type="entry name" value="FN3"/>
    <property type="match status" value="3"/>
</dbReference>
<dbReference type="FunFam" id="2.60.40.10:FF:000879">
    <property type="entry name" value="Colony stimulating factor 3 receptor"/>
    <property type="match status" value="1"/>
</dbReference>
<dbReference type="FunFam" id="2.60.40.10:FF:001209">
    <property type="entry name" value="Colony stimulating factor 3 receptor"/>
    <property type="match status" value="1"/>
</dbReference>
<dbReference type="FunFam" id="2.60.40.10:FF:001234">
    <property type="entry name" value="Colony stimulating factor 3 receptor"/>
    <property type="match status" value="1"/>
</dbReference>
<dbReference type="FunFam" id="2.60.40.10:FF:000997">
    <property type="entry name" value="Colony stimulating factor 3 receptor (Granulocyte)"/>
    <property type="match status" value="1"/>
</dbReference>
<dbReference type="FunFam" id="2.60.40.10:FF:000465">
    <property type="entry name" value="Granulocyte colony-stimulating factor receptor"/>
    <property type="match status" value="1"/>
</dbReference>
<dbReference type="FunFam" id="2.60.40.10:FF:000839">
    <property type="entry name" value="granulocyte colony-stimulating factor receptor isoform X1"/>
    <property type="match status" value="1"/>
</dbReference>
<dbReference type="Gene3D" id="2.60.40.10">
    <property type="entry name" value="Immunoglobulins"/>
    <property type="match status" value="6"/>
</dbReference>
<dbReference type="InterPro" id="IPR003961">
    <property type="entry name" value="FN3_dom"/>
</dbReference>
<dbReference type="InterPro" id="IPR036116">
    <property type="entry name" value="FN3_sf"/>
</dbReference>
<dbReference type="InterPro" id="IPR003529">
    <property type="entry name" value="Hematopoietin_rcpt_Gp130_CS"/>
</dbReference>
<dbReference type="InterPro" id="IPR036179">
    <property type="entry name" value="Ig-like_dom_sf"/>
</dbReference>
<dbReference type="InterPro" id="IPR013783">
    <property type="entry name" value="Ig-like_fold"/>
</dbReference>
<dbReference type="InterPro" id="IPR010457">
    <property type="entry name" value="IgC2-like_lig-bd"/>
</dbReference>
<dbReference type="InterPro" id="IPR052672">
    <property type="entry name" value="Type1_Cytokine_Rcpt_Type2"/>
</dbReference>
<dbReference type="PANTHER" id="PTHR48423:SF2">
    <property type="entry name" value="INTERLEUKIN-12 RECEPTOR SUBUNIT BETA-2"/>
    <property type="match status" value="1"/>
</dbReference>
<dbReference type="PANTHER" id="PTHR48423">
    <property type="entry name" value="INTERLEUKIN-27 RECEPTOR SUBUNIT ALPHA"/>
    <property type="match status" value="1"/>
</dbReference>
<dbReference type="Pfam" id="PF06328">
    <property type="entry name" value="Lep_receptor_Ig"/>
    <property type="match status" value="1"/>
</dbReference>
<dbReference type="SMART" id="SM00060">
    <property type="entry name" value="FN3"/>
    <property type="match status" value="4"/>
</dbReference>
<dbReference type="SUPFAM" id="SSF49265">
    <property type="entry name" value="Fibronectin type III"/>
    <property type="match status" value="4"/>
</dbReference>
<dbReference type="SUPFAM" id="SSF48726">
    <property type="entry name" value="Immunoglobulin"/>
    <property type="match status" value="1"/>
</dbReference>
<dbReference type="PROSITE" id="PS50853">
    <property type="entry name" value="FN3"/>
    <property type="match status" value="5"/>
</dbReference>
<dbReference type="PROSITE" id="PS01353">
    <property type="entry name" value="HEMATOPO_REC_L_F2"/>
    <property type="match status" value="1"/>
</dbReference>
<accession>P40223</accession>
<accession>A2A8Y3</accession>
<feature type="signal peptide" evidence="3">
    <location>
        <begin position="1"/>
        <end position="25"/>
    </location>
</feature>
<feature type="chain" id="PRO_0000010875" description="Granulocyte colony-stimulating factor receptor">
    <location>
        <begin position="26"/>
        <end position="837"/>
    </location>
</feature>
<feature type="topological domain" description="Extracellular" evidence="3">
    <location>
        <begin position="26"/>
        <end position="626"/>
    </location>
</feature>
<feature type="transmembrane region" description="Helical" evidence="3">
    <location>
        <begin position="627"/>
        <end position="650"/>
    </location>
</feature>
<feature type="topological domain" description="Cytoplasmic" evidence="3">
    <location>
        <begin position="651"/>
        <end position="837"/>
    </location>
</feature>
<feature type="domain" description="Ig-like C2-type">
    <location>
        <begin position="26"/>
        <end position="118"/>
    </location>
</feature>
<feature type="domain" description="Fibronectin type-III 1" evidence="4">
    <location>
        <begin position="126"/>
        <end position="231"/>
    </location>
</feature>
<feature type="domain" description="Fibronectin type-III 2" evidence="4">
    <location>
        <begin position="236"/>
        <end position="331"/>
    </location>
</feature>
<feature type="domain" description="Fibronectin type-III 3" evidence="4">
    <location>
        <begin position="334"/>
        <end position="433"/>
    </location>
</feature>
<feature type="domain" description="Fibronectin type-III 4" evidence="4">
    <location>
        <begin position="434"/>
        <end position="529"/>
    </location>
</feature>
<feature type="domain" description="Fibronectin type-III 5" evidence="4">
    <location>
        <begin position="530"/>
        <end position="624"/>
    </location>
</feature>
<feature type="short sequence motif" description="WSXWS motif">
    <location>
        <begin position="319"/>
        <end position="323"/>
    </location>
</feature>
<feature type="short sequence motif" description="Box 1 motif">
    <location>
        <begin position="658"/>
        <end position="666"/>
    </location>
</feature>
<feature type="glycosylation site" description="N-linked (GlcNAc...) asparagine" evidence="3">
    <location>
        <position position="51"/>
    </location>
</feature>
<feature type="glycosylation site" description="N-linked (GlcNAc...) asparagine" evidence="3">
    <location>
        <position position="94"/>
    </location>
</feature>
<feature type="glycosylation site" description="N-linked (GlcNAc...) asparagine" evidence="5">
    <location>
        <position position="129"/>
    </location>
</feature>
<feature type="glycosylation site" description="N-linked (GlcNAc...) asparagine" evidence="3">
    <location>
        <position position="186"/>
    </location>
</feature>
<feature type="glycosylation site" description="N-linked (GlcNAc...) asparagine" evidence="3">
    <location>
        <position position="279"/>
    </location>
</feature>
<feature type="glycosylation site" description="N-linked (GlcNAc...) asparagine" evidence="3">
    <location>
        <position position="392"/>
    </location>
</feature>
<feature type="glycosylation site" description="N-linked (GlcNAc...) asparagine" evidence="3">
    <location>
        <position position="408"/>
    </location>
</feature>
<feature type="glycosylation site" description="N-linked (GlcNAc...) asparagine" evidence="3">
    <location>
        <position position="474"/>
    </location>
</feature>
<feature type="glycosylation site" description="N-linked (GlcNAc...) asparagine" evidence="3">
    <location>
        <position position="487"/>
    </location>
</feature>
<feature type="glycosylation site" description="N-linked (GlcNAc...) asparagine" evidence="3">
    <location>
        <position position="582"/>
    </location>
</feature>
<feature type="glycosylation site" description="N-linked (GlcNAc...) asparagine" evidence="3">
    <location>
        <position position="613"/>
    </location>
</feature>
<feature type="disulfide bond" evidence="1">
    <location>
        <begin position="26"/>
        <end position="52"/>
    </location>
</feature>
<feature type="disulfide bond" evidence="1">
    <location>
        <begin position="46"/>
        <end position="102"/>
    </location>
</feature>
<feature type="disulfide bond" evidence="5">
    <location>
        <begin position="132"/>
        <end position="143"/>
    </location>
</feature>
<feature type="disulfide bond" evidence="5">
    <location>
        <begin position="168"/>
        <end position="219"/>
    </location>
</feature>
<feature type="disulfide bond" evidence="5">
    <location>
        <begin position="178"/>
        <end position="187"/>
    </location>
</feature>
<feature type="disulfide bond" evidence="5">
    <location>
        <begin position="249"/>
        <end position="296"/>
    </location>
</feature>
<feature type="disulfide bond" evidence="5">
    <location>
        <begin position="267"/>
        <end position="310"/>
    </location>
</feature>
<feature type="sequence conflict" description="In Ref. 1; AAA37673." evidence="7" ref="1">
    <original>S</original>
    <variation>N</variation>
    <location>
        <position position="379"/>
    </location>
</feature>
<feature type="strand" evidence="8">
    <location>
        <begin position="128"/>
        <end position="135"/>
    </location>
</feature>
<feature type="turn" evidence="8">
    <location>
        <begin position="136"/>
        <end position="139"/>
    </location>
</feature>
<feature type="strand" evidence="8">
    <location>
        <begin position="140"/>
        <end position="146"/>
    </location>
</feature>
<feature type="strand" evidence="8">
    <location>
        <begin position="156"/>
        <end position="163"/>
    </location>
</feature>
<feature type="helix" evidence="8">
    <location>
        <begin position="166"/>
        <end position="168"/>
    </location>
</feature>
<feature type="strand" evidence="8">
    <location>
        <begin position="174"/>
        <end position="179"/>
    </location>
</feature>
<feature type="strand" evidence="8">
    <location>
        <begin position="186"/>
        <end position="190"/>
    </location>
</feature>
<feature type="helix" evidence="8">
    <location>
        <begin position="191"/>
        <end position="193"/>
    </location>
</feature>
<feature type="strand" evidence="8">
    <location>
        <begin position="200"/>
        <end position="208"/>
    </location>
</feature>
<feature type="strand" evidence="8">
    <location>
        <begin position="211"/>
        <end position="214"/>
    </location>
</feature>
<feature type="strand" evidence="8">
    <location>
        <begin position="218"/>
        <end position="220"/>
    </location>
</feature>
<feature type="helix" evidence="8">
    <location>
        <begin position="222"/>
        <end position="225"/>
    </location>
</feature>
<feature type="strand" evidence="10">
    <location>
        <begin position="227"/>
        <end position="229"/>
    </location>
</feature>
<feature type="strand" evidence="8">
    <location>
        <begin position="232"/>
        <end position="235"/>
    </location>
</feature>
<feature type="strand" evidence="9">
    <location>
        <begin position="242"/>
        <end position="244"/>
    </location>
</feature>
<feature type="strand" evidence="8">
    <location>
        <begin position="250"/>
        <end position="255"/>
    </location>
</feature>
<feature type="helix" evidence="8">
    <location>
        <begin position="258"/>
        <end position="260"/>
    </location>
</feature>
<feature type="strand" evidence="8">
    <location>
        <begin position="265"/>
        <end position="275"/>
    </location>
</feature>
<feature type="strand" evidence="8">
    <location>
        <begin position="281"/>
        <end position="288"/>
    </location>
</feature>
<feature type="strand" evidence="8">
    <location>
        <begin position="290"/>
        <end position="295"/>
    </location>
</feature>
<feature type="strand" evidence="8">
    <location>
        <begin position="304"/>
        <end position="315"/>
    </location>
</feature>
<feature type="strand" evidence="8">
    <location>
        <begin position="326"/>
        <end position="328"/>
    </location>
</feature>
<reference key="1">
    <citation type="journal article" date="1990" name="Cell">
        <title>Expression cloning of a receptor for murine granulocyte colony-stimulating factor.</title>
        <authorList>
            <person name="Fukunaga R."/>
            <person name="Ishizaka-Ikeda E."/>
            <person name="Seto Y."/>
            <person name="Nagata S."/>
        </authorList>
    </citation>
    <scope>NUCLEOTIDE SEQUENCE [MRNA]</scope>
</reference>
<reference key="2">
    <citation type="journal article" date="2009" name="PLoS Biol.">
        <title>Lineage-specific biology revealed by a finished genome assembly of the mouse.</title>
        <authorList>
            <person name="Church D.M."/>
            <person name="Goodstadt L."/>
            <person name="Hillier L.W."/>
            <person name="Zody M.C."/>
            <person name="Goldstein S."/>
            <person name="She X."/>
            <person name="Bult C.J."/>
            <person name="Agarwala R."/>
            <person name="Cherry J.L."/>
            <person name="DiCuccio M."/>
            <person name="Hlavina W."/>
            <person name="Kapustin Y."/>
            <person name="Meric P."/>
            <person name="Maglott D."/>
            <person name="Birtle Z."/>
            <person name="Marques A.C."/>
            <person name="Graves T."/>
            <person name="Zhou S."/>
            <person name="Teague B."/>
            <person name="Potamousis K."/>
            <person name="Churas C."/>
            <person name="Place M."/>
            <person name="Herschleb J."/>
            <person name="Runnheim R."/>
            <person name="Forrest D."/>
            <person name="Amos-Landgraf J."/>
            <person name="Schwartz D.C."/>
            <person name="Cheng Z."/>
            <person name="Lindblad-Toh K."/>
            <person name="Eichler E.E."/>
            <person name="Ponting C.P."/>
        </authorList>
    </citation>
    <scope>NUCLEOTIDE SEQUENCE [LARGE SCALE GENOMIC DNA]</scope>
    <source>
        <strain>C57BL/6J</strain>
    </source>
</reference>
<reference key="3">
    <citation type="journal article" date="2010" name="Immunity">
        <title>Carcinoembryonic antigen-related cell adhesion molecule-1 regulates granulopoiesis by inhibition of granulocyte colony-stimulating factor receptor.</title>
        <authorList>
            <person name="Pan H."/>
            <person name="Shively J.E."/>
        </authorList>
    </citation>
    <scope>INTERACTION WITH CEACAM1</scope>
</reference>
<reference key="4">
    <citation type="journal article" date="1997" name="Nat. Struct. Biol.">
        <title>Solution structure of an extracellular domain containing the WSxWS motif of the granulocyte colony-stimulating factor receptor and its interaction with ligand.</title>
        <authorList>
            <person name="Yamasaki K."/>
            <person name="Naito S."/>
            <person name="Anaguchi H."/>
            <person name="Ohkubo T."/>
            <person name="Ota Y."/>
        </authorList>
    </citation>
    <scope>STRUCTURE BY NMR OF 225-333</scope>
</reference>
<reference key="5">
    <citation type="journal article" date="1999" name="Nature">
        <title>Atomic structure of the GCSF-receptor complex showing a new cytokine-receptor recognition scheme.</title>
        <authorList>
            <person name="Aritomi M."/>
            <person name="Kunishima N."/>
            <person name="Okamoto T."/>
            <person name="Kuroki R."/>
            <person name="Ota Y."/>
            <person name="Morikawa K."/>
        </authorList>
    </citation>
    <scope>X-RAY CRYSTALLOGRAPHY (2.8 ANGSTROMS) OF 120-334 IN COMPLEX WITH CSF3</scope>
    <scope>SUBUNIT</scope>
    <scope>GLYCOSYLATION AT ASN-129</scope>
    <scope>DISULFIDE BONDS</scope>
</reference>
<name>CSF3R_MOUSE</name>
<protein>
    <recommendedName>
        <fullName>Granulocyte colony-stimulating factor receptor</fullName>
        <shortName>G-CSF receptor</shortName>
        <shortName>G-CSF-R</shortName>
    </recommendedName>
    <cdAntigenName>CD114</cdAntigenName>
</protein>